<keyword id="KW-0012">Acyltransferase</keyword>
<keyword id="KW-0963">Cytoplasm</keyword>
<keyword id="KW-0479">Metal-binding</keyword>
<keyword id="KW-1185">Reference proteome</keyword>
<keyword id="KW-0808">Transferase</keyword>
<keyword id="KW-0862">Zinc</keyword>
<dbReference type="EC" id="2.3.1.255" evidence="2"/>
<dbReference type="EC" id="2.3.1.258" evidence="2"/>
<dbReference type="EMBL" id="CP000077">
    <property type="protein sequence ID" value="AAY79869.1"/>
    <property type="molecule type" value="Genomic_DNA"/>
</dbReference>
<dbReference type="RefSeq" id="WP_011277371.1">
    <property type="nucleotide sequence ID" value="NC_007181.1"/>
</dbReference>
<dbReference type="SMR" id="Q4JBG0"/>
<dbReference type="STRING" id="330779.Saci_0459"/>
<dbReference type="GeneID" id="14550986"/>
<dbReference type="KEGG" id="sai:Saci_0459"/>
<dbReference type="PATRIC" id="fig|330779.12.peg.456"/>
<dbReference type="eggNOG" id="arCOG00833">
    <property type="taxonomic scope" value="Archaea"/>
</dbReference>
<dbReference type="HOGENOM" id="CLU_013985_23_0_2"/>
<dbReference type="Proteomes" id="UP000001018">
    <property type="component" value="Chromosome"/>
</dbReference>
<dbReference type="GO" id="GO:0031415">
    <property type="term" value="C:NatA complex"/>
    <property type="evidence" value="ECO:0007669"/>
    <property type="project" value="InterPro"/>
</dbReference>
<dbReference type="GO" id="GO:0046872">
    <property type="term" value="F:metal ion binding"/>
    <property type="evidence" value="ECO:0007669"/>
    <property type="project" value="UniProtKB-KW"/>
</dbReference>
<dbReference type="GO" id="GO:0120518">
    <property type="term" value="F:protein N-terminal-methionine acetyltransferase activity"/>
    <property type="evidence" value="ECO:0007669"/>
    <property type="project" value="UniProtKB-EC"/>
</dbReference>
<dbReference type="GO" id="GO:1990189">
    <property type="term" value="F:protein N-terminal-serine acetyltransferase activity"/>
    <property type="evidence" value="ECO:0007669"/>
    <property type="project" value="RHEA"/>
</dbReference>
<dbReference type="GO" id="GO:0004596">
    <property type="term" value="F:protein-N-terminal amino-acid acetyltransferase activity"/>
    <property type="evidence" value="ECO:0000250"/>
    <property type="project" value="UniProtKB"/>
</dbReference>
<dbReference type="GO" id="GO:0008999">
    <property type="term" value="F:protein-N-terminal-alanine acetyltransferase activity"/>
    <property type="evidence" value="ECO:0007669"/>
    <property type="project" value="RHEA"/>
</dbReference>
<dbReference type="CDD" id="cd04301">
    <property type="entry name" value="NAT_SF"/>
    <property type="match status" value="1"/>
</dbReference>
<dbReference type="FunFam" id="3.40.630.30:FF:000200">
    <property type="entry name" value="N-alpha-acetyltransferase"/>
    <property type="match status" value="1"/>
</dbReference>
<dbReference type="Gene3D" id="3.40.630.30">
    <property type="match status" value="1"/>
</dbReference>
<dbReference type="InterPro" id="IPR006464">
    <property type="entry name" value="AcTrfase_RimI/Ard1"/>
</dbReference>
<dbReference type="InterPro" id="IPR016181">
    <property type="entry name" value="Acyl_CoA_acyltransferase"/>
</dbReference>
<dbReference type="InterPro" id="IPR045047">
    <property type="entry name" value="Ard1-like"/>
</dbReference>
<dbReference type="InterPro" id="IPR000182">
    <property type="entry name" value="GNAT_dom"/>
</dbReference>
<dbReference type="NCBIfam" id="TIGR01575">
    <property type="entry name" value="rimI"/>
    <property type="match status" value="1"/>
</dbReference>
<dbReference type="PANTHER" id="PTHR23091">
    <property type="entry name" value="N-TERMINAL ACETYLTRANSFERASE"/>
    <property type="match status" value="1"/>
</dbReference>
<dbReference type="PANTHER" id="PTHR23091:SF4">
    <property type="entry name" value="N-TERMINAL AMINO-ACID N(ALPHA)-ACETYLTRANSFERASE NATA"/>
    <property type="match status" value="1"/>
</dbReference>
<dbReference type="Pfam" id="PF00583">
    <property type="entry name" value="Acetyltransf_1"/>
    <property type="match status" value="1"/>
</dbReference>
<dbReference type="SUPFAM" id="SSF55729">
    <property type="entry name" value="Acyl-CoA N-acyltransferases (Nat)"/>
    <property type="match status" value="1"/>
</dbReference>
<dbReference type="PROSITE" id="PS51186">
    <property type="entry name" value="GNAT"/>
    <property type="match status" value="1"/>
</dbReference>
<comment type="function">
    <text evidence="2">Displays alpha (N-terminal) acetyltransferase activity. Catalyzes the covalent attachment of an acetyl moiety from acetyl-CoA to the free alpha-amino group at the N-terminus of a protein.</text>
</comment>
<comment type="catalytic activity">
    <reaction evidence="2">
        <text>N-terminal L-alanyl-[protein] + acetyl-CoA = N-terminal N(alpha)-acetyl-L-alanyl-[protein] + CoA + H(+)</text>
        <dbReference type="Rhea" id="RHEA:50500"/>
        <dbReference type="Rhea" id="RHEA-COMP:12701"/>
        <dbReference type="Rhea" id="RHEA-COMP:12702"/>
        <dbReference type="ChEBI" id="CHEBI:15378"/>
        <dbReference type="ChEBI" id="CHEBI:57287"/>
        <dbReference type="ChEBI" id="CHEBI:57288"/>
        <dbReference type="ChEBI" id="CHEBI:64718"/>
        <dbReference type="ChEBI" id="CHEBI:83683"/>
        <dbReference type="EC" id="2.3.1.255"/>
    </reaction>
</comment>
<comment type="catalytic activity">
    <reaction evidence="2">
        <text>N-terminal L-seryl-[protein] + acetyl-CoA = N-terminal N(alpha)-acetyl-L-seryl-[protein] + CoA + H(+)</text>
        <dbReference type="Rhea" id="RHEA:50504"/>
        <dbReference type="Rhea" id="RHEA-COMP:12703"/>
        <dbReference type="Rhea" id="RHEA-COMP:12704"/>
        <dbReference type="ChEBI" id="CHEBI:15378"/>
        <dbReference type="ChEBI" id="CHEBI:57287"/>
        <dbReference type="ChEBI" id="CHEBI:57288"/>
        <dbReference type="ChEBI" id="CHEBI:64738"/>
        <dbReference type="ChEBI" id="CHEBI:83690"/>
        <dbReference type="EC" id="2.3.1.255"/>
    </reaction>
</comment>
<comment type="catalytic activity">
    <reaction evidence="2">
        <text>N-terminal L-methionyl-L-leucyl-[protein] + acetyl-CoA = N-terminal N(alpha)-acetyl-L-methionyl-L-leucyl-[protein] + CoA + H(+)</text>
        <dbReference type="Rhea" id="RHEA:50520"/>
        <dbReference type="Rhea" id="RHEA-COMP:12711"/>
        <dbReference type="Rhea" id="RHEA-COMP:12712"/>
        <dbReference type="ChEBI" id="CHEBI:15378"/>
        <dbReference type="ChEBI" id="CHEBI:57287"/>
        <dbReference type="ChEBI" id="CHEBI:57288"/>
        <dbReference type="ChEBI" id="CHEBI:133377"/>
        <dbReference type="ChEBI" id="CHEBI:133378"/>
        <dbReference type="EC" id="2.3.1.258"/>
    </reaction>
</comment>
<comment type="catalytic activity">
    <reaction evidence="2">
        <text>N-terminal L-methionyl-L-glutamyl-[protein] + acetyl-CoA = N-terminal N(alpha)-acetyl-L-methionyl-L-glutamyl-[protein] + CoA + H(+)</text>
        <dbReference type="Rhea" id="RHEA:50488"/>
        <dbReference type="Rhea" id="RHEA-COMP:12696"/>
        <dbReference type="Rhea" id="RHEA-COMP:12697"/>
        <dbReference type="ChEBI" id="CHEBI:15378"/>
        <dbReference type="ChEBI" id="CHEBI:57287"/>
        <dbReference type="ChEBI" id="CHEBI:57288"/>
        <dbReference type="ChEBI" id="CHEBI:133359"/>
        <dbReference type="ChEBI" id="CHEBI:133360"/>
    </reaction>
</comment>
<comment type="subunit">
    <text evidence="2">Homodimer.</text>
</comment>
<comment type="subcellular location">
    <subcellularLocation>
        <location evidence="2">Cytoplasm</location>
    </subcellularLocation>
</comment>
<comment type="miscellaneous">
    <text evidence="2">NAT does not require a binding partner for activity.</text>
</comment>
<comment type="similarity">
    <text evidence="2">Belongs to the acetyltransferase family. ARD1 subfamily.</text>
</comment>
<feature type="chain" id="PRO_0000281643" description="N-alpha-acetyltransferase">
    <location>
        <begin position="1"/>
        <end position="168"/>
    </location>
</feature>
<feature type="domain" description="N-acetyltransferase" evidence="3">
    <location>
        <begin position="13"/>
        <end position="168"/>
    </location>
</feature>
<feature type="binding site" evidence="2">
    <location>
        <position position="38"/>
    </location>
    <ligand>
        <name>substrate</name>
    </ligand>
</feature>
<feature type="binding site" evidence="2">
    <location>
        <position position="89"/>
    </location>
    <ligand>
        <name>Zn(2+)</name>
        <dbReference type="ChEBI" id="CHEBI:29105"/>
    </ligand>
</feature>
<feature type="binding site" evidence="2">
    <location>
        <begin position="93"/>
        <end position="95"/>
    </location>
    <ligand>
        <name>acetyl-CoA</name>
        <dbReference type="ChEBI" id="CHEBI:57288"/>
    </ligand>
</feature>
<feature type="binding site" evidence="1">
    <location>
        <begin position="93"/>
        <end position="95"/>
    </location>
    <ligand>
        <name>CoA</name>
        <dbReference type="ChEBI" id="CHEBI:57287"/>
    </ligand>
</feature>
<feature type="binding site" evidence="2">
    <location>
        <begin position="101"/>
        <end position="106"/>
    </location>
    <ligand>
        <name>acetyl-CoA</name>
        <dbReference type="ChEBI" id="CHEBI:57288"/>
    </ligand>
</feature>
<feature type="binding site" evidence="1">
    <location>
        <begin position="101"/>
        <end position="106"/>
    </location>
    <ligand>
        <name>CoA</name>
        <dbReference type="ChEBI" id="CHEBI:57287"/>
    </ligand>
</feature>
<feature type="binding site" evidence="2">
    <location>
        <position position="128"/>
    </location>
    <ligand>
        <name>Zn(2+)</name>
        <dbReference type="ChEBI" id="CHEBI:29105"/>
    </ligand>
</feature>
<feature type="binding site" evidence="2">
    <location>
        <position position="133"/>
    </location>
    <ligand>
        <name>acetyl-CoA</name>
        <dbReference type="ChEBI" id="CHEBI:57288"/>
    </ligand>
</feature>
<feature type="binding site" evidence="1">
    <location>
        <position position="133"/>
    </location>
    <ligand>
        <name>CoA</name>
        <dbReference type="ChEBI" id="CHEBI:57287"/>
    </ligand>
</feature>
<feature type="binding site" evidence="2">
    <location>
        <begin position="140"/>
        <end position="142"/>
    </location>
    <ligand>
        <name>acetyl-CoA</name>
        <dbReference type="ChEBI" id="CHEBI:57288"/>
    </ligand>
</feature>
<feature type="binding site" evidence="2">
    <location>
        <position position="155"/>
    </location>
    <ligand>
        <name>substrate</name>
    </ligand>
</feature>
<feature type="site" description="Plays an important role in substrate specificity" evidence="2">
    <location>
        <position position="36"/>
    </location>
</feature>
<feature type="site" description="Plays an important role in modulating multiple conformations of loop regions and contributes to protein thermostability" evidence="2">
    <location>
        <position position="76"/>
    </location>
</feature>
<feature type="site" description="Plays an important role in modulating multiple conformations of loop regions and contributes to protein thermostability" evidence="2">
    <location>
        <position position="83"/>
    </location>
</feature>
<reference key="1">
    <citation type="journal article" date="2005" name="J. Bacteriol.">
        <title>The genome of Sulfolobus acidocaldarius, a model organism of the Crenarchaeota.</title>
        <authorList>
            <person name="Chen L."/>
            <person name="Bruegger K."/>
            <person name="Skovgaard M."/>
            <person name="Redder P."/>
            <person name="She Q."/>
            <person name="Torarinsson E."/>
            <person name="Greve B."/>
            <person name="Awayez M."/>
            <person name="Zibat A."/>
            <person name="Klenk H.-P."/>
            <person name="Garrett R.A."/>
        </authorList>
    </citation>
    <scope>NUCLEOTIDE SEQUENCE [LARGE SCALE GENOMIC DNA]</scope>
    <source>
        <strain>ATCC 33909 / DSM 639 / JCM 8929 / NBRC 15157 / NCIMB 11770</strain>
    </source>
</reference>
<organism>
    <name type="scientific">Sulfolobus acidocaldarius (strain ATCC 33909 / DSM 639 / JCM 8929 / NBRC 15157 / NCIMB 11770)</name>
    <dbReference type="NCBI Taxonomy" id="330779"/>
    <lineage>
        <taxon>Archaea</taxon>
        <taxon>Thermoproteota</taxon>
        <taxon>Thermoprotei</taxon>
        <taxon>Sulfolobales</taxon>
        <taxon>Sulfolobaceae</taxon>
        <taxon>Sulfolobus</taxon>
    </lineage>
</organism>
<accession>Q4JBG0</accession>
<evidence type="ECO:0000250" key="1"/>
<evidence type="ECO:0000250" key="2">
    <source>
        <dbReference type="UniProtKB" id="Q980R9"/>
    </source>
</evidence>
<evidence type="ECO:0000255" key="3">
    <source>
        <dbReference type="PROSITE-ProRule" id="PRU00532"/>
    </source>
</evidence>
<protein>
    <recommendedName>
        <fullName evidence="2">N-alpha-acetyltransferase</fullName>
        <shortName evidence="2">NAT</shortName>
        <ecNumber evidence="2">2.3.1.255</ecNumber>
        <ecNumber evidence="2">2.3.1.258</ecNumber>
    </recommendedName>
    <alternativeName>
        <fullName evidence="2">Amino-terminal acetyltransferase</fullName>
    </alternativeName>
    <alternativeName>
        <fullName evidence="2">N-terminal acetyltransferase</fullName>
    </alternativeName>
</protein>
<name>NAT_SULAC</name>
<gene>
    <name type="ordered locus">Saci_0459</name>
</gene>
<proteinExistence type="inferred from homology"/>
<sequence>MEITEDSKRKINYQIRLATLSDIDQIIRINRSALPENYPYYFFVEHLKEYGQAFYVADLEGEVVGYVMPRIEWGFSNLKHIPSLVRKGHIVSIAVLEPFRKIGVGTSLLQNSLKAMKDTYNAEEVYLEVRVTNYPAISLYKKFNFREVKLLKHYYADGEDAYLMAAPL</sequence>